<dbReference type="EMBL" id="CR555306">
    <property type="protein sequence ID" value="CAI09924.1"/>
    <property type="molecule type" value="Genomic_DNA"/>
</dbReference>
<dbReference type="RefSeq" id="WP_011239575.1">
    <property type="nucleotide sequence ID" value="NC_006513.1"/>
</dbReference>
<dbReference type="SMR" id="Q5NYE0"/>
<dbReference type="STRING" id="76114.ebB233"/>
<dbReference type="KEGG" id="eba:ebB233"/>
<dbReference type="eggNOG" id="COG0691">
    <property type="taxonomic scope" value="Bacteria"/>
</dbReference>
<dbReference type="HOGENOM" id="CLU_108953_3_0_4"/>
<dbReference type="OrthoDB" id="9805462at2"/>
<dbReference type="Proteomes" id="UP000006552">
    <property type="component" value="Chromosome"/>
</dbReference>
<dbReference type="GO" id="GO:0005829">
    <property type="term" value="C:cytosol"/>
    <property type="evidence" value="ECO:0007669"/>
    <property type="project" value="TreeGrafter"/>
</dbReference>
<dbReference type="GO" id="GO:0003723">
    <property type="term" value="F:RNA binding"/>
    <property type="evidence" value="ECO:0007669"/>
    <property type="project" value="UniProtKB-UniRule"/>
</dbReference>
<dbReference type="GO" id="GO:0070929">
    <property type="term" value="P:trans-translation"/>
    <property type="evidence" value="ECO:0007669"/>
    <property type="project" value="UniProtKB-UniRule"/>
</dbReference>
<dbReference type="CDD" id="cd09294">
    <property type="entry name" value="SmpB"/>
    <property type="match status" value="1"/>
</dbReference>
<dbReference type="Gene3D" id="2.40.280.10">
    <property type="match status" value="1"/>
</dbReference>
<dbReference type="HAMAP" id="MF_00023">
    <property type="entry name" value="SmpB"/>
    <property type="match status" value="1"/>
</dbReference>
<dbReference type="InterPro" id="IPR023620">
    <property type="entry name" value="SmpB"/>
</dbReference>
<dbReference type="InterPro" id="IPR000037">
    <property type="entry name" value="SsrA-bd_prot"/>
</dbReference>
<dbReference type="InterPro" id="IPR020081">
    <property type="entry name" value="SsrA-bd_prot_CS"/>
</dbReference>
<dbReference type="NCBIfam" id="NF003843">
    <property type="entry name" value="PRK05422.1"/>
    <property type="match status" value="1"/>
</dbReference>
<dbReference type="NCBIfam" id="TIGR00086">
    <property type="entry name" value="smpB"/>
    <property type="match status" value="1"/>
</dbReference>
<dbReference type="PANTHER" id="PTHR30308:SF2">
    <property type="entry name" value="SSRA-BINDING PROTEIN"/>
    <property type="match status" value="1"/>
</dbReference>
<dbReference type="PANTHER" id="PTHR30308">
    <property type="entry name" value="TMRNA-BINDING COMPONENT OF TRANS-TRANSLATION TAGGING COMPLEX"/>
    <property type="match status" value="1"/>
</dbReference>
<dbReference type="Pfam" id="PF01668">
    <property type="entry name" value="SmpB"/>
    <property type="match status" value="1"/>
</dbReference>
<dbReference type="SUPFAM" id="SSF74982">
    <property type="entry name" value="Small protein B (SmpB)"/>
    <property type="match status" value="1"/>
</dbReference>
<dbReference type="PROSITE" id="PS01317">
    <property type="entry name" value="SSRP"/>
    <property type="match status" value="1"/>
</dbReference>
<protein>
    <recommendedName>
        <fullName evidence="1">SsrA-binding protein</fullName>
    </recommendedName>
    <alternativeName>
        <fullName evidence="1">Small protein B</fullName>
    </alternativeName>
</protein>
<evidence type="ECO:0000255" key="1">
    <source>
        <dbReference type="HAMAP-Rule" id="MF_00023"/>
    </source>
</evidence>
<evidence type="ECO:0000256" key="2">
    <source>
        <dbReference type="SAM" id="MobiDB-lite"/>
    </source>
</evidence>
<keyword id="KW-0963">Cytoplasm</keyword>
<keyword id="KW-1185">Reference proteome</keyword>
<keyword id="KW-0694">RNA-binding</keyword>
<accession>Q5NYE0</accession>
<gene>
    <name evidence="1" type="primary">smpB</name>
    <name type="ordered locus">AZOSEA37990</name>
    <name type="ORF">ebB233</name>
</gene>
<feature type="chain" id="PRO_0000102895" description="SsrA-binding protein">
    <location>
        <begin position="1"/>
        <end position="148"/>
    </location>
</feature>
<feature type="region of interest" description="Disordered" evidence="2">
    <location>
        <begin position="127"/>
        <end position="148"/>
    </location>
</feature>
<feature type="compositionally biased region" description="Basic and acidic residues" evidence="2">
    <location>
        <begin position="127"/>
        <end position="142"/>
    </location>
</feature>
<name>SSRP_AROAE</name>
<comment type="function">
    <text evidence="1">Required for rescue of stalled ribosomes mediated by trans-translation. Binds to transfer-messenger RNA (tmRNA), required for stable association of tmRNA with ribosomes. tmRNA and SmpB together mimic tRNA shape, replacing the anticodon stem-loop with SmpB. tmRNA is encoded by the ssrA gene; the 2 termini fold to resemble tRNA(Ala) and it encodes a 'tag peptide', a short internal open reading frame. During trans-translation Ala-aminoacylated tmRNA acts like a tRNA, entering the A-site of stalled ribosomes, displacing the stalled mRNA. The ribosome then switches to translate the ORF on the tmRNA; the nascent peptide is terminated with the 'tag peptide' encoded by the tmRNA and targeted for degradation. The ribosome is freed to recommence translation, which seems to be the essential function of trans-translation.</text>
</comment>
<comment type="subcellular location">
    <subcellularLocation>
        <location evidence="1">Cytoplasm</location>
    </subcellularLocation>
    <text evidence="1">The tmRNA-SmpB complex associates with stalled 70S ribosomes.</text>
</comment>
<comment type="similarity">
    <text evidence="1">Belongs to the SmpB family.</text>
</comment>
<sequence>MSIIDNRKAFHDYFIEETYEAGLVLEGWEVKAIRAGRANIKEAYVILRGEELFILGMHISALQSASTHVETDPVRTRKLLMHAKEIAKLIGKVERAGFTLVPLDLHYAKGRIKATIGLAKGKKQYDKRESEKERDWERDKARLMRVKT</sequence>
<proteinExistence type="inferred from homology"/>
<reference key="1">
    <citation type="journal article" date="2005" name="Arch. Microbiol.">
        <title>The genome sequence of an anaerobic aromatic-degrading denitrifying bacterium, strain EbN1.</title>
        <authorList>
            <person name="Rabus R."/>
            <person name="Kube M."/>
            <person name="Heider J."/>
            <person name="Beck A."/>
            <person name="Heitmann K."/>
            <person name="Widdel F."/>
            <person name="Reinhardt R."/>
        </authorList>
    </citation>
    <scope>NUCLEOTIDE SEQUENCE [LARGE SCALE GENOMIC DNA]</scope>
    <source>
        <strain>DSM 19018 / LMG 30748 / EbN1</strain>
    </source>
</reference>
<organism>
    <name type="scientific">Aromatoleum aromaticum (strain DSM 19018 / LMG 30748 / EbN1)</name>
    <name type="common">Azoarcus sp. (strain EbN1)</name>
    <dbReference type="NCBI Taxonomy" id="76114"/>
    <lineage>
        <taxon>Bacteria</taxon>
        <taxon>Pseudomonadati</taxon>
        <taxon>Pseudomonadota</taxon>
        <taxon>Betaproteobacteria</taxon>
        <taxon>Rhodocyclales</taxon>
        <taxon>Rhodocyclaceae</taxon>
        <taxon>Aromatoleum</taxon>
    </lineage>
</organism>